<sequence length="902" mass="104194">MFPALETHLKQTIPDPYEDFMYRHLQYYGYFKAQRGSLPNSATHQHVRKNNPQCLLNGSLGEKDDLIPDTLQKEKLLWPISLSSAVHRQIEAINRDFHSCLGWMQWRGLSSLQPPPPRFKDSPASAFRVAGITDSHMLSLPHLRSRQLLYDELDEVNPRLREPQELFSILSTKRPLQAPRWPIECEVIKENIHHIEWAPPQPEYFYQPKGNEKVPEIVGEKKGTVVYQLDSVPIEGSYFTSSRVGGKRGIVKELAVTLQGPEDNTLLFESRFESGNLQKAVRVDTYEYELTLRTDLYTNKHTQWFYFRVQNTRKDATYRFTIVNLLKPKSLYTVGMKPLLYSQLDANTRNIGWRREGNEIKYYKNNTDDGQQPFYCLTWTIQFPYDQDTCFFAHFYPYTYTDLQCYLLSVANNPIQSQFCKLQTLCRSLAGNTVYLLTITNPSQTPQEAAAKKAVVLSARVHPGESNGSWVMKGFLDFILSNSPDAQLLRDIFVFKVLPMLNPDGVIVGNYRCSLAGRDLNRHYKTILKESFPCIWYTRNMIKRLLEEREVLLYCDFHGHSRKNNIFLYGCNNNNRKYWLHERVFPLMLCKNAPDKFSFHSCNFKVQKCKEGTGRVVMWRMGILNSYTMESTFGGSTLGNKRDTHFTIEDLKSLGYHVCDTLLDFCDPDQMKFTQCLAELKELLRQEIHKKFHELGQDVDLEGSWSDISLSDIESSTSGSDSSLSDGLPVHLANIADELTQKKKMFKKKKKKSLQTRKQRNEQYQKKNLMQKLKLTEDTSEKAGFASTLQKQPTFFKNSENSSFLPMKNENPRLNETNLNRRDKDTPLDPSMATLILPKNKGRMQNKKPGFTVSCSPKRTINSSQEPAPGMKPNWPRSRYPATKRGCAAMAAYPSLHIYTYP</sequence>
<evidence type="ECO:0000250" key="1"/>
<evidence type="ECO:0000250" key="2">
    <source>
        <dbReference type="UniProtKB" id="Q8CDK2"/>
    </source>
</evidence>
<evidence type="ECO:0000255" key="3">
    <source>
        <dbReference type="PROSITE-ProRule" id="PRU01379"/>
    </source>
</evidence>
<evidence type="ECO:0000256" key="4">
    <source>
        <dbReference type="SAM" id="MobiDB-lite"/>
    </source>
</evidence>
<evidence type="ECO:0000269" key="5">
    <source>
    </source>
</evidence>
<evidence type="ECO:0000269" key="6">
    <source>
    </source>
</evidence>
<evidence type="ECO:0000269" key="7">
    <source>
    </source>
</evidence>
<evidence type="ECO:0000269" key="8">
    <source>
    </source>
</evidence>
<evidence type="ECO:0000269" key="9">
    <source ref="2"/>
</evidence>
<evidence type="ECO:0000303" key="10">
    <source>
    </source>
</evidence>
<evidence type="ECO:0000303" key="11">
    <source>
    </source>
</evidence>
<evidence type="ECO:0000303" key="12">
    <source ref="2"/>
</evidence>
<evidence type="ECO:0000305" key="13"/>
<evidence type="ECO:0000312" key="14">
    <source>
        <dbReference type="HGNC" id="HGNC:26296"/>
    </source>
</evidence>
<accession>Q5U5Z8</accession>
<accession>A8MPX2</accession>
<accession>Q53FV5</accession>
<accession>Q8IV57</accession>
<accession>Q9H5C0</accession>
<organism>
    <name type="scientific">Homo sapiens</name>
    <name type="common">Human</name>
    <dbReference type="NCBI Taxonomy" id="9606"/>
    <lineage>
        <taxon>Eukaryota</taxon>
        <taxon>Metazoa</taxon>
        <taxon>Chordata</taxon>
        <taxon>Craniata</taxon>
        <taxon>Vertebrata</taxon>
        <taxon>Euteleostomi</taxon>
        <taxon>Mammalia</taxon>
        <taxon>Eutheria</taxon>
        <taxon>Euarchontoglires</taxon>
        <taxon>Primates</taxon>
        <taxon>Haplorrhini</taxon>
        <taxon>Catarrhini</taxon>
        <taxon>Hominidae</taxon>
        <taxon>Homo</taxon>
    </lineage>
</organism>
<keyword id="KW-0025">Alternative splicing</keyword>
<keyword id="KW-0121">Carboxypeptidase</keyword>
<keyword id="KW-0966">Cell projection</keyword>
<keyword id="KW-0963">Cytoplasm</keyword>
<keyword id="KW-0206">Cytoskeleton</keyword>
<keyword id="KW-0378">Hydrolase</keyword>
<keyword id="KW-0479">Metal-binding</keyword>
<keyword id="KW-0482">Metalloprotease</keyword>
<keyword id="KW-0645">Protease</keyword>
<keyword id="KW-1185">Reference proteome</keyword>
<keyword id="KW-0862">Zinc</keyword>
<protein>
    <recommendedName>
        <fullName evidence="2">Cytosolic carboxypeptidase 2</fullName>
        <ecNumber evidence="2">3.4.17.-</ecNumber>
    </recommendedName>
    <alternativeName>
        <fullName>ATP/GTP-binding protein-like 2</fullName>
    </alternativeName>
    <alternativeName>
        <fullName evidence="13">Protein deglutamylase CCP2</fullName>
    </alternativeName>
</protein>
<gene>
    <name evidence="14" type="primary">AGBL2</name>
    <name evidence="2" type="synonym">CCP2</name>
</gene>
<feature type="chain" id="PRO_0000283748" description="Cytosolic carboxypeptidase 2">
    <location>
        <begin position="1"/>
        <end position="902"/>
    </location>
</feature>
<feature type="domain" description="Peptidase M14" evidence="3">
    <location>
        <begin position="396"/>
        <end position="666"/>
    </location>
</feature>
<feature type="region of interest" description="Disordered" evidence="4">
    <location>
        <begin position="746"/>
        <end position="770"/>
    </location>
</feature>
<feature type="region of interest" description="Disordered" evidence="4">
    <location>
        <begin position="796"/>
        <end position="879"/>
    </location>
</feature>
<feature type="compositionally biased region" description="Basic residues" evidence="4">
    <location>
        <begin position="746"/>
        <end position="758"/>
    </location>
</feature>
<feature type="compositionally biased region" description="Polar residues" evidence="4">
    <location>
        <begin position="853"/>
        <end position="866"/>
    </location>
</feature>
<feature type="active site" description="Proton donor/acceptor" evidence="3">
    <location>
        <position position="630"/>
    </location>
</feature>
<feature type="binding site" evidence="3">
    <location>
        <position position="462"/>
    </location>
    <ligand>
        <name>Zn(2+)</name>
        <dbReference type="ChEBI" id="CHEBI:29105"/>
        <note>catalytic</note>
    </ligand>
</feature>
<feature type="binding site" evidence="3">
    <location>
        <position position="465"/>
    </location>
    <ligand>
        <name>Zn(2+)</name>
        <dbReference type="ChEBI" id="CHEBI:29105"/>
        <note>catalytic</note>
    </ligand>
</feature>
<feature type="binding site" evidence="3">
    <location>
        <position position="558"/>
    </location>
    <ligand>
        <name>Zn(2+)</name>
        <dbReference type="ChEBI" id="CHEBI:29105"/>
        <note>catalytic</note>
    </ligand>
</feature>
<feature type="splice variant" id="VSP_024361" description="In isoform 3." evidence="11">
    <location>
        <begin position="1"/>
        <end position="617"/>
    </location>
</feature>
<feature type="splice variant" id="VSP_024360" description="In isoform 2." evidence="10 12">
    <location>
        <begin position="1"/>
        <end position="471"/>
    </location>
</feature>
<feature type="sequence variant" id="VAR_046637" description="In dbSNP:rs12795414.">
    <original>I</original>
    <variation>R</variation>
    <location>
        <position position="90"/>
    </location>
</feature>
<feature type="sequence variant" id="VAR_046638" description="In dbSNP:rs35898124.">
    <original>T</original>
    <variation>P</variation>
    <location>
        <position position="333"/>
    </location>
</feature>
<feature type="sequence variant" id="VAR_031572" description="In dbSNP:rs7941404.">
    <original>R</original>
    <variation>H</variation>
    <location>
        <position position="349"/>
    </location>
</feature>
<feature type="sequence variant" id="VAR_046639" description="In dbSNP:rs1870545.">
    <original>D</original>
    <variation>G</variation>
    <location>
        <position position="368"/>
    </location>
</feature>
<feature type="sequence variant" id="VAR_046640" description="In dbSNP:rs12286721." evidence="5 6 9">
    <original>M</original>
    <variation>I</variation>
    <location>
        <position position="671"/>
    </location>
</feature>
<name>CBPC2_HUMAN</name>
<proteinExistence type="evidence at protein level"/>
<reference key="1">
    <citation type="journal article" date="2004" name="Nat. Genet.">
        <title>Complete sequencing and characterization of 21,243 full-length human cDNAs.</title>
        <authorList>
            <person name="Ota T."/>
            <person name="Suzuki Y."/>
            <person name="Nishikawa T."/>
            <person name="Otsuki T."/>
            <person name="Sugiyama T."/>
            <person name="Irie R."/>
            <person name="Wakamatsu A."/>
            <person name="Hayashi K."/>
            <person name="Sato H."/>
            <person name="Nagai K."/>
            <person name="Kimura K."/>
            <person name="Makita H."/>
            <person name="Sekine M."/>
            <person name="Obayashi M."/>
            <person name="Nishi T."/>
            <person name="Shibahara T."/>
            <person name="Tanaka T."/>
            <person name="Ishii S."/>
            <person name="Yamamoto J."/>
            <person name="Saito K."/>
            <person name="Kawai Y."/>
            <person name="Isono Y."/>
            <person name="Nakamura Y."/>
            <person name="Nagahari K."/>
            <person name="Murakami K."/>
            <person name="Yasuda T."/>
            <person name="Iwayanagi T."/>
            <person name="Wagatsuma M."/>
            <person name="Shiratori A."/>
            <person name="Sudo H."/>
            <person name="Hosoiri T."/>
            <person name="Kaku Y."/>
            <person name="Kodaira H."/>
            <person name="Kondo H."/>
            <person name="Sugawara M."/>
            <person name="Takahashi M."/>
            <person name="Kanda K."/>
            <person name="Yokoi T."/>
            <person name="Furuya T."/>
            <person name="Kikkawa E."/>
            <person name="Omura Y."/>
            <person name="Abe K."/>
            <person name="Kamihara K."/>
            <person name="Katsuta N."/>
            <person name="Sato K."/>
            <person name="Tanikawa M."/>
            <person name="Yamazaki M."/>
            <person name="Ninomiya K."/>
            <person name="Ishibashi T."/>
            <person name="Yamashita H."/>
            <person name="Murakawa K."/>
            <person name="Fujimori K."/>
            <person name="Tanai H."/>
            <person name="Kimata M."/>
            <person name="Watanabe M."/>
            <person name="Hiraoka S."/>
            <person name="Chiba Y."/>
            <person name="Ishida S."/>
            <person name="Ono Y."/>
            <person name="Takiguchi S."/>
            <person name="Watanabe S."/>
            <person name="Yosida M."/>
            <person name="Hotuta T."/>
            <person name="Kusano J."/>
            <person name="Kanehori K."/>
            <person name="Takahashi-Fujii A."/>
            <person name="Hara H."/>
            <person name="Tanase T.-O."/>
            <person name="Nomura Y."/>
            <person name="Togiya S."/>
            <person name="Komai F."/>
            <person name="Hara R."/>
            <person name="Takeuchi K."/>
            <person name="Arita M."/>
            <person name="Imose N."/>
            <person name="Musashino K."/>
            <person name="Yuuki H."/>
            <person name="Oshima A."/>
            <person name="Sasaki N."/>
            <person name="Aotsuka S."/>
            <person name="Yoshikawa Y."/>
            <person name="Matsunawa H."/>
            <person name="Ichihara T."/>
            <person name="Shiohata N."/>
            <person name="Sano S."/>
            <person name="Moriya S."/>
            <person name="Momiyama H."/>
            <person name="Satoh N."/>
            <person name="Takami S."/>
            <person name="Terashima Y."/>
            <person name="Suzuki O."/>
            <person name="Nakagawa S."/>
            <person name="Senoh A."/>
            <person name="Mizoguchi H."/>
            <person name="Goto Y."/>
            <person name="Shimizu F."/>
            <person name="Wakebe H."/>
            <person name="Hishigaki H."/>
            <person name="Watanabe T."/>
            <person name="Sugiyama A."/>
            <person name="Takemoto M."/>
            <person name="Kawakami B."/>
            <person name="Yamazaki M."/>
            <person name="Watanabe K."/>
            <person name="Kumagai A."/>
            <person name="Itakura S."/>
            <person name="Fukuzumi Y."/>
            <person name="Fujimori Y."/>
            <person name="Komiyama M."/>
            <person name="Tashiro H."/>
            <person name="Tanigami A."/>
            <person name="Fujiwara T."/>
            <person name="Ono T."/>
            <person name="Yamada K."/>
            <person name="Fujii Y."/>
            <person name="Ozaki K."/>
            <person name="Hirao M."/>
            <person name="Ohmori Y."/>
            <person name="Kawabata A."/>
            <person name="Hikiji T."/>
            <person name="Kobatake N."/>
            <person name="Inagaki H."/>
            <person name="Ikema Y."/>
            <person name="Okamoto S."/>
            <person name="Okitani R."/>
            <person name="Kawakami T."/>
            <person name="Noguchi S."/>
            <person name="Itoh T."/>
            <person name="Shigeta K."/>
            <person name="Senba T."/>
            <person name="Matsumura K."/>
            <person name="Nakajima Y."/>
            <person name="Mizuno T."/>
            <person name="Morinaga M."/>
            <person name="Sasaki M."/>
            <person name="Togashi T."/>
            <person name="Oyama M."/>
            <person name="Hata H."/>
            <person name="Watanabe M."/>
            <person name="Komatsu T."/>
            <person name="Mizushima-Sugano J."/>
            <person name="Satoh T."/>
            <person name="Shirai Y."/>
            <person name="Takahashi Y."/>
            <person name="Nakagawa K."/>
            <person name="Okumura K."/>
            <person name="Nagase T."/>
            <person name="Nomura N."/>
            <person name="Kikuchi H."/>
            <person name="Masuho Y."/>
            <person name="Yamashita R."/>
            <person name="Nakai K."/>
            <person name="Yada T."/>
            <person name="Nakamura Y."/>
            <person name="Ohara O."/>
            <person name="Isogai T."/>
            <person name="Sugano S."/>
        </authorList>
    </citation>
    <scope>NUCLEOTIDE SEQUENCE [LARGE SCALE MRNA] (ISOFORM 2)</scope>
    <scope>VARIANT ILE-671</scope>
    <source>
        <tissue>Lung</tissue>
    </source>
</reference>
<reference key="2">
    <citation type="submission" date="2005-04" db="EMBL/GenBank/DDBJ databases">
        <authorList>
            <person name="Suzuki Y."/>
            <person name="Sugano S."/>
            <person name="Totoki Y."/>
            <person name="Toyoda A."/>
            <person name="Takeda T."/>
            <person name="Sakaki Y."/>
            <person name="Tanaka A."/>
            <person name="Yokoyama S."/>
        </authorList>
    </citation>
    <scope>NUCLEOTIDE SEQUENCE [LARGE SCALE MRNA] (ISOFORM 2)</scope>
    <scope>VARIANT ILE-671</scope>
    <source>
        <tissue>Lung</tissue>
    </source>
</reference>
<reference key="3">
    <citation type="journal article" date="2006" name="Nature">
        <title>Human chromosome 11 DNA sequence and analysis including novel gene identification.</title>
        <authorList>
            <person name="Taylor T.D."/>
            <person name="Noguchi H."/>
            <person name="Totoki Y."/>
            <person name="Toyoda A."/>
            <person name="Kuroki Y."/>
            <person name="Dewar K."/>
            <person name="Lloyd C."/>
            <person name="Itoh T."/>
            <person name="Takeda T."/>
            <person name="Kim D.-W."/>
            <person name="She X."/>
            <person name="Barlow K.F."/>
            <person name="Bloom T."/>
            <person name="Bruford E."/>
            <person name="Chang J.L."/>
            <person name="Cuomo C.A."/>
            <person name="Eichler E."/>
            <person name="FitzGerald M.G."/>
            <person name="Jaffe D.B."/>
            <person name="LaButti K."/>
            <person name="Nicol R."/>
            <person name="Park H.-S."/>
            <person name="Seaman C."/>
            <person name="Sougnez C."/>
            <person name="Yang X."/>
            <person name="Zimmer A.R."/>
            <person name="Zody M.C."/>
            <person name="Birren B.W."/>
            <person name="Nusbaum C."/>
            <person name="Fujiyama A."/>
            <person name="Hattori M."/>
            <person name="Rogers J."/>
            <person name="Lander E.S."/>
            <person name="Sakaki Y."/>
        </authorList>
    </citation>
    <scope>NUCLEOTIDE SEQUENCE [LARGE SCALE GENOMIC DNA]</scope>
</reference>
<reference key="4">
    <citation type="journal article" date="2004" name="Genome Res.">
        <title>The status, quality, and expansion of the NIH full-length cDNA project: the Mammalian Gene Collection (MGC).</title>
        <authorList>
            <consortium name="The MGC Project Team"/>
        </authorList>
    </citation>
    <scope>NUCLEOTIDE SEQUENCE [LARGE SCALE MRNA] (ISOFORMS 1 AND 3)</scope>
    <scope>VARIANT ILE-671</scope>
    <source>
        <tissue>Lung</tissue>
        <tissue>Testis</tissue>
    </source>
</reference>
<reference key="5">
    <citation type="journal article" date="2011" name="Cancer Res.">
        <title>Tumor suppressor RARRES1 interacts with cytoplasmic carboxypeptidase AGBL2 to regulate the alpha-tubulin tyrosination cycle.</title>
        <authorList>
            <person name="Sahab Z.J."/>
            <person name="Hall M.D."/>
            <person name="Me Sung Y."/>
            <person name="Dakshanamurthy S."/>
            <person name="Ji Y."/>
            <person name="Kumar D."/>
            <person name="Byers S.W."/>
        </authorList>
    </citation>
    <scope>3D-STRUCTURE MODELING</scope>
    <scope>ACTIVITY REGULATION</scope>
    <scope>INTERACTION WITH RARRES1; KIF11 AND MAPRE1</scope>
</reference>
<reference key="6">
    <citation type="journal article" date="2013" name="FASEB J.">
        <title>Functional segregation and emerging role of cilia-related cytosolic carboxypeptidases (CCPs).</title>
        <authorList>
            <person name="Rodriguez de la Vega Otazo M."/>
            <person name="Lorenzo J."/>
            <person name="Tort O."/>
            <person name="Aviles F.X."/>
            <person name="Bautista J.M."/>
        </authorList>
    </citation>
    <scope>SUBCELLULAR LOCATION</scope>
</reference>
<comment type="function">
    <text evidence="2">Metallocarboxypeptidase that mediates deglutamylation of tubulin and non-tubulin target proteins. Catalyzes the removal of polyglutamate side chains present on the gamma-carboxyl group of glutamate residues within the C-terminal tail of tubulin protein. Specifically cleaves tubulin long-side-chains, while it is not able to remove the branching point glutamate. Also catalyzes the removal of polyglutamate residues from the carboxy-terminus of non-tubulin proteins such as MYLK.</text>
</comment>
<comment type="catalytic activity">
    <reaction evidence="2">
        <text>(L-glutamyl)(n+1)-gamma-L-glutamyl-L-glutamyl-[protein] + H2O = (L-glutamyl)(n)-gamma-L-glutamyl-L-glutamyl-[protein] + L-glutamate</text>
        <dbReference type="Rhea" id="RHEA:60004"/>
        <dbReference type="Rhea" id="RHEA-COMP:15519"/>
        <dbReference type="Rhea" id="RHEA-COMP:15675"/>
        <dbReference type="ChEBI" id="CHEBI:15377"/>
        <dbReference type="ChEBI" id="CHEBI:29985"/>
        <dbReference type="ChEBI" id="CHEBI:143623"/>
    </reaction>
    <physiologicalReaction direction="left-to-right" evidence="2">
        <dbReference type="Rhea" id="RHEA:60005"/>
    </physiologicalReaction>
</comment>
<comment type="cofactor">
    <cofactor evidence="1">
        <name>Zn(2+)</name>
        <dbReference type="ChEBI" id="CHEBI:29105"/>
    </cofactor>
    <text evidence="1">Binds 1 zinc ion per subunit.</text>
</comment>
<comment type="activity regulation">
    <text evidence="7">Inhibited by RARRES1.</text>
</comment>
<comment type="subunit">
    <text evidence="7">Interacts with RARRES1, KIF11 AND MAPRE1.</text>
</comment>
<comment type="interaction">
    <interactant intactId="EBI-12226473">
        <id>Q5U5Z8-3</id>
    </interactant>
    <interactant intactId="EBI-739624">
        <id>Q8NHQ1</id>
        <label>CEP70</label>
    </interactant>
    <organismsDiffer>false</organismsDiffer>
    <experiments>3</experiments>
</comment>
<comment type="interaction">
    <interactant intactId="EBI-12226473">
        <id>Q5U5Z8-3</id>
    </interactant>
    <interactant intactId="EBI-1246238">
        <id>P17568</id>
        <label>NDUFB7</label>
    </interactant>
    <organismsDiffer>false</organismsDiffer>
    <experiments>3</experiments>
</comment>
<comment type="subcellular location">
    <subcellularLocation>
        <location evidence="2">Cytoplasm</location>
        <location evidence="2">Cytosol</location>
    </subcellularLocation>
    <subcellularLocation>
        <location evidence="8">Cytoplasm</location>
        <location evidence="8">Cytoskeleton</location>
        <location evidence="8">Microtubule organizing center</location>
        <location evidence="8">Centrosome</location>
        <location evidence="8">Centriole</location>
    </subcellularLocation>
    <subcellularLocation>
        <location evidence="8">Cytoplasm</location>
        <location evidence="8">Cytoskeleton</location>
        <location evidence="8">Cilium basal body</location>
    </subcellularLocation>
    <text evidence="8">Colocalizes with gamma-tubulin in the centrioles and with glutamylated tubulin in the basal bodies of ciliated cells.</text>
</comment>
<comment type="alternative products">
    <event type="alternative splicing"/>
    <isoform>
        <id>Q5U5Z8-1</id>
        <name>1</name>
        <sequence type="displayed"/>
    </isoform>
    <isoform>
        <id>Q5U5Z8-2</id>
        <name>2</name>
        <sequence type="described" ref="VSP_024360"/>
    </isoform>
    <isoform>
        <id>Q5U5Z8-3</id>
        <name>3</name>
        <sequence type="described" ref="VSP_024361"/>
    </isoform>
</comment>
<comment type="similarity">
    <text evidence="13">Belongs to the peptidase M14 family.</text>
</comment>
<comment type="caution">
    <text evidence="2 7">Was initially shown to catalyze the removal of carboxy-terminus tyrosine from alpha-tubulin (PubMed:21303978). However, later studies did not identified any detyrosinase or deglycylase activities from the carboxy-terminus of tubulin (By similarity).</text>
</comment>
<comment type="caution">
    <text evidence="7">Was originally thought to have detyrosinating activity from C-terminal positions on tubulin.</text>
</comment>
<comment type="sequence caution" evidence="13">
    <conflict type="erroneous termination">
        <sequence resource="EMBL-CDS" id="BAB15707"/>
    </conflict>
    <text>Truncated C-terminus.</text>
</comment>
<comment type="sequence caution" evidence="13">
    <conflict type="erroneous initiation">
        <sequence resource="EMBL-CDS" id="BAD96891"/>
    </conflict>
</comment>
<comment type="sequence caution" evidence="13">
    <conflict type="erroneous initiation">
        <sequence resource="EMBL-CDS" id="BAD96896"/>
    </conflict>
</comment>
<dbReference type="EC" id="3.4.17.-" evidence="2"/>
<dbReference type="EMBL" id="AK027251">
    <property type="protein sequence ID" value="BAB15707.1"/>
    <property type="status" value="ALT_SEQ"/>
    <property type="molecule type" value="mRNA"/>
</dbReference>
<dbReference type="EMBL" id="AK223171">
    <property type="protein sequence ID" value="BAD96891.1"/>
    <property type="status" value="ALT_INIT"/>
    <property type="molecule type" value="mRNA"/>
</dbReference>
<dbReference type="EMBL" id="AK223176">
    <property type="protein sequence ID" value="BAD96896.1"/>
    <property type="status" value="ALT_INIT"/>
    <property type="molecule type" value="mRNA"/>
</dbReference>
<dbReference type="EMBL" id="AC021443">
    <property type="status" value="NOT_ANNOTATED_CDS"/>
    <property type="molecule type" value="Genomic_DNA"/>
</dbReference>
<dbReference type="EMBL" id="BC028200">
    <property type="protein sequence ID" value="AAH28200.1"/>
    <property type="molecule type" value="mRNA"/>
</dbReference>
<dbReference type="EMBL" id="BC036234">
    <property type="protein sequence ID" value="AAH36234.1"/>
    <property type="molecule type" value="mRNA"/>
</dbReference>
<dbReference type="CCDS" id="CCDS7944.1">
    <molecule id="Q5U5Z8-1"/>
</dbReference>
<dbReference type="RefSeq" id="NP_079059.2">
    <molecule id="Q5U5Z8-1"/>
    <property type="nucleotide sequence ID" value="NM_024783.3"/>
</dbReference>
<dbReference type="SMR" id="Q5U5Z8"/>
<dbReference type="BioGRID" id="122932">
    <property type="interactions" value="11"/>
</dbReference>
<dbReference type="FunCoup" id="Q5U5Z8">
    <property type="interactions" value="411"/>
</dbReference>
<dbReference type="IntAct" id="Q5U5Z8">
    <property type="interactions" value="4"/>
</dbReference>
<dbReference type="STRING" id="9606.ENSP00000435582"/>
<dbReference type="ChEMBL" id="CHEMBL3886062"/>
<dbReference type="MEROPS" id="M14.029"/>
<dbReference type="GlyGen" id="Q5U5Z8">
    <property type="glycosylation" value="2 sites, 1 O-linked glycan (1 site)"/>
</dbReference>
<dbReference type="iPTMnet" id="Q5U5Z8"/>
<dbReference type="PhosphoSitePlus" id="Q5U5Z8"/>
<dbReference type="BioMuta" id="AGBL2"/>
<dbReference type="DMDM" id="206729855"/>
<dbReference type="jPOST" id="Q5U5Z8"/>
<dbReference type="MassIVE" id="Q5U5Z8"/>
<dbReference type="PaxDb" id="9606-ENSP00000435582"/>
<dbReference type="PeptideAtlas" id="Q5U5Z8"/>
<dbReference type="Antibodypedia" id="1166">
    <property type="antibodies" value="120 antibodies from 23 providers"/>
</dbReference>
<dbReference type="DNASU" id="79841"/>
<dbReference type="Ensembl" id="ENST00000525123.6">
    <molecule id="Q5U5Z8-1"/>
    <property type="protein sequence ID" value="ENSP00000435582.1"/>
    <property type="gene ID" value="ENSG00000165923.17"/>
</dbReference>
<dbReference type="Ensembl" id="ENST00000645431.2">
    <molecule id="Q5U5Z8-1"/>
    <property type="protein sequence ID" value="ENSP00000494229.1"/>
    <property type="gene ID" value="ENSG00000285501.2"/>
</dbReference>
<dbReference type="GeneID" id="79841"/>
<dbReference type="KEGG" id="hsa:79841"/>
<dbReference type="MANE-Select" id="ENST00000525123.6">
    <property type="protein sequence ID" value="ENSP00000435582.1"/>
    <property type="RefSeq nucleotide sequence ID" value="NM_024783.4"/>
    <property type="RefSeq protein sequence ID" value="NP_079059.2"/>
</dbReference>
<dbReference type="UCSC" id="uc001ngg.4">
    <molecule id="Q5U5Z8-1"/>
    <property type="organism name" value="human"/>
</dbReference>
<dbReference type="AGR" id="HGNC:26296"/>
<dbReference type="CTD" id="79841"/>
<dbReference type="DisGeNET" id="79841"/>
<dbReference type="GeneCards" id="AGBL2"/>
<dbReference type="HGNC" id="HGNC:26296">
    <property type="gene designation" value="AGBL2"/>
</dbReference>
<dbReference type="HPA" id="ENSG00000165923">
    <property type="expression patterns" value="Tissue enhanced (fallopian tube, testis)"/>
</dbReference>
<dbReference type="MIM" id="617345">
    <property type="type" value="gene"/>
</dbReference>
<dbReference type="neXtProt" id="NX_Q5U5Z8"/>
<dbReference type="OpenTargets" id="ENSG00000165923"/>
<dbReference type="PharmGKB" id="PA142672634"/>
<dbReference type="VEuPathDB" id="HostDB:ENSG00000165923"/>
<dbReference type="eggNOG" id="KOG3641">
    <property type="taxonomic scope" value="Eukaryota"/>
</dbReference>
<dbReference type="GeneTree" id="ENSGT00940000160201"/>
<dbReference type="HOGENOM" id="CLU_007523_5_0_1"/>
<dbReference type="InParanoid" id="Q5U5Z8"/>
<dbReference type="OMA" id="KGRMQVL"/>
<dbReference type="OrthoDB" id="10253041at2759"/>
<dbReference type="PAN-GO" id="Q5U5Z8">
    <property type="GO annotations" value="1 GO annotation based on evolutionary models"/>
</dbReference>
<dbReference type="PhylomeDB" id="Q5U5Z8"/>
<dbReference type="TreeFam" id="TF313794"/>
<dbReference type="PathwayCommons" id="Q5U5Z8"/>
<dbReference type="Reactome" id="R-HSA-8955332">
    <property type="pathway name" value="Carboxyterminal post-translational modifications of tubulin"/>
</dbReference>
<dbReference type="SignaLink" id="Q5U5Z8"/>
<dbReference type="BioGRID-ORCS" id="79841">
    <property type="hits" value="8 hits in 1145 CRISPR screens"/>
</dbReference>
<dbReference type="ChiTaRS" id="AGBL2">
    <property type="organism name" value="human"/>
</dbReference>
<dbReference type="GenomeRNAi" id="79841"/>
<dbReference type="Pharos" id="Q5U5Z8">
    <property type="development level" value="Tchem"/>
</dbReference>
<dbReference type="PRO" id="PR:Q5U5Z8"/>
<dbReference type="Proteomes" id="UP000005640">
    <property type="component" value="Chromosome 11"/>
</dbReference>
<dbReference type="RNAct" id="Q5U5Z8">
    <property type="molecule type" value="protein"/>
</dbReference>
<dbReference type="Bgee" id="ENSG00000165923">
    <property type="expression patterns" value="Expressed in right uterine tube and 96 other cell types or tissues"/>
</dbReference>
<dbReference type="ExpressionAtlas" id="Q5U5Z8">
    <property type="expression patterns" value="baseline and differential"/>
</dbReference>
<dbReference type="GO" id="GO:0005814">
    <property type="term" value="C:centriole"/>
    <property type="evidence" value="ECO:0000314"/>
    <property type="project" value="UniProtKB"/>
</dbReference>
<dbReference type="GO" id="GO:0036064">
    <property type="term" value="C:ciliary basal body"/>
    <property type="evidence" value="ECO:0000314"/>
    <property type="project" value="UniProtKB"/>
</dbReference>
<dbReference type="GO" id="GO:0005737">
    <property type="term" value="C:cytoplasm"/>
    <property type="evidence" value="ECO:0000318"/>
    <property type="project" value="GO_Central"/>
</dbReference>
<dbReference type="GO" id="GO:0005829">
    <property type="term" value="C:cytosol"/>
    <property type="evidence" value="ECO:0000250"/>
    <property type="project" value="UniProtKB"/>
</dbReference>
<dbReference type="GO" id="GO:0015630">
    <property type="term" value="C:microtubule cytoskeleton"/>
    <property type="evidence" value="ECO:0000318"/>
    <property type="project" value="GO_Central"/>
</dbReference>
<dbReference type="GO" id="GO:0004181">
    <property type="term" value="F:metallocarboxypeptidase activity"/>
    <property type="evidence" value="ECO:0000250"/>
    <property type="project" value="UniProtKB"/>
</dbReference>
<dbReference type="GO" id="GO:0015631">
    <property type="term" value="F:tubulin binding"/>
    <property type="evidence" value="ECO:0000318"/>
    <property type="project" value="GO_Central"/>
</dbReference>
<dbReference type="GO" id="GO:0008270">
    <property type="term" value="F:zinc ion binding"/>
    <property type="evidence" value="ECO:0007669"/>
    <property type="project" value="InterPro"/>
</dbReference>
<dbReference type="GO" id="GO:0035610">
    <property type="term" value="P:protein side chain deglutamylation"/>
    <property type="evidence" value="ECO:0000250"/>
    <property type="project" value="UniProtKB"/>
</dbReference>
<dbReference type="GO" id="GO:0006508">
    <property type="term" value="P:proteolysis"/>
    <property type="evidence" value="ECO:0007669"/>
    <property type="project" value="UniProtKB-KW"/>
</dbReference>
<dbReference type="CDD" id="cd06907">
    <property type="entry name" value="M14_AGBL2-3_like"/>
    <property type="match status" value="1"/>
</dbReference>
<dbReference type="FunFam" id="2.60.40.3120:FF:000001">
    <property type="entry name" value="cytosolic carboxypeptidase 1 isoform X1"/>
    <property type="match status" value="1"/>
</dbReference>
<dbReference type="FunFam" id="3.40.630.10:FF:000011">
    <property type="entry name" value="cytosolic carboxypeptidase 2 isoform X1"/>
    <property type="match status" value="1"/>
</dbReference>
<dbReference type="Gene3D" id="2.60.40.3120">
    <property type="match status" value="1"/>
</dbReference>
<dbReference type="Gene3D" id="3.40.630.10">
    <property type="entry name" value="Zn peptidases"/>
    <property type="match status" value="1"/>
</dbReference>
<dbReference type="InterPro" id="IPR050821">
    <property type="entry name" value="Cytosolic_carboxypeptidase"/>
</dbReference>
<dbReference type="InterPro" id="IPR040626">
    <property type="entry name" value="Pepdidase_M14_N"/>
</dbReference>
<dbReference type="InterPro" id="IPR000834">
    <property type="entry name" value="Peptidase_M14"/>
</dbReference>
<dbReference type="PANTHER" id="PTHR12756">
    <property type="entry name" value="CYTOSOLIC CARBOXYPEPTIDASE"/>
    <property type="match status" value="1"/>
</dbReference>
<dbReference type="PANTHER" id="PTHR12756:SF41">
    <property type="entry name" value="CYTOSOLIC CARBOXYPEPTIDASE 2"/>
    <property type="match status" value="1"/>
</dbReference>
<dbReference type="Pfam" id="PF18027">
    <property type="entry name" value="Pepdidase_M14_N"/>
    <property type="match status" value="1"/>
</dbReference>
<dbReference type="Pfam" id="PF00246">
    <property type="entry name" value="Peptidase_M14"/>
    <property type="match status" value="1"/>
</dbReference>
<dbReference type="SUPFAM" id="SSF53187">
    <property type="entry name" value="Zn-dependent exopeptidases"/>
    <property type="match status" value="1"/>
</dbReference>
<dbReference type="PROSITE" id="PS52035">
    <property type="entry name" value="PEPTIDASE_M14"/>
    <property type="match status" value="1"/>
</dbReference>